<feature type="chain" id="PRO_0000143073" description="Bcl-2-like protein 13">
    <location>
        <begin position="1"/>
        <end position="485"/>
    </location>
</feature>
<feature type="transmembrane region" description="Helical" evidence="2">
    <location>
        <begin position="460"/>
        <end position="480"/>
    </location>
</feature>
<feature type="repeat" description="A">
    <location>
        <begin position="246"/>
        <end position="256"/>
    </location>
</feature>
<feature type="repeat" description="A; approximate">
    <location>
        <begin position="261"/>
        <end position="271"/>
    </location>
</feature>
<feature type="repeat" description="B">
    <location>
        <begin position="425"/>
        <end position="441"/>
    </location>
</feature>
<feature type="repeat" description="B; approximate">
    <location>
        <begin position="443"/>
        <end position="459"/>
    </location>
</feature>
<feature type="region of interest" description="Disordered" evidence="3">
    <location>
        <begin position="218"/>
        <end position="248"/>
    </location>
</feature>
<feature type="region of interest" description="Disordered" evidence="3">
    <location>
        <begin position="418"/>
        <end position="451"/>
    </location>
</feature>
<feature type="short sequence motif" description="BH4">
    <location>
        <begin position="14"/>
        <end position="30"/>
    </location>
</feature>
<feature type="short sequence motif" description="BH3">
    <location>
        <begin position="100"/>
        <end position="116"/>
    </location>
</feature>
<feature type="short sequence motif" description="BH1">
    <location>
        <begin position="147"/>
        <end position="157"/>
    </location>
</feature>
<feature type="short sequence motif" description="BH2">
    <location>
        <begin position="193"/>
        <end position="206"/>
    </location>
</feature>
<feature type="compositionally biased region" description="Polar residues" evidence="3">
    <location>
        <begin position="229"/>
        <end position="248"/>
    </location>
</feature>
<feature type="modified residue" description="Phosphoserine" evidence="10">
    <location>
        <position position="38"/>
    </location>
</feature>
<feature type="modified residue" description="Phosphoserine" evidence="14">
    <location>
        <position position="259"/>
    </location>
</feature>
<feature type="modified residue" description="Phosphoserine" evidence="14">
    <location>
        <position position="261"/>
    </location>
</feature>
<feature type="modified residue" description="Phosphoserine" evidence="13">
    <location>
        <position position="303"/>
    </location>
</feature>
<feature type="modified residue" description="Phosphoserine" evidence="14">
    <location>
        <position position="326"/>
    </location>
</feature>
<feature type="modified residue" description="Phosphoserine" evidence="1">
    <location>
        <position position="371"/>
    </location>
</feature>
<feature type="modified residue" description="Phosphoserine" evidence="1">
    <location>
        <position position="375"/>
    </location>
</feature>
<feature type="modified residue" description="Phosphoserine" evidence="14">
    <location>
        <position position="410"/>
    </location>
</feature>
<feature type="modified residue" description="Phosphoserine" evidence="10 11 12 13">
    <location>
        <position position="420"/>
    </location>
</feature>
<feature type="modified residue" description="Phosphoserine" evidence="10 11 12 13">
    <location>
        <position position="426"/>
    </location>
</feature>
<feature type="modified residue" description="Phosphoserine" evidence="11">
    <location>
        <position position="429"/>
    </location>
</feature>
<feature type="modified residue" description="Phosphoserine" evidence="13">
    <location>
        <position position="444"/>
    </location>
</feature>
<feature type="splice variant" id="VSP_046931" description="In isoform 3." evidence="6">
    <location>
        <begin position="1"/>
        <end position="162"/>
    </location>
</feature>
<feature type="splice variant" id="VSP_000526" description="In isoform 1." evidence="5 7 8">
    <original>G</original>
    <variation>V</variation>
    <location>
        <position position="201"/>
    </location>
</feature>
<feature type="splice variant" id="VSP_000527" description="In isoform 1." evidence="5 7 8">
    <location>
        <begin position="202"/>
        <end position="485"/>
    </location>
</feature>
<feature type="sequence variant" id="VAR_059141" description="In dbSNP:rs2587070." evidence="10">
    <original>I</original>
    <variation>R</variation>
    <location>
        <position position="46"/>
    </location>
</feature>
<feature type="sequence variant" id="VAR_059142" description="In dbSNP:rs2587070.">
    <original>I</original>
    <variation>T</variation>
    <location>
        <position position="46"/>
    </location>
</feature>
<feature type="sequence variant" id="VAR_024377" description="In dbSNP:rs16981016.">
    <original>I</original>
    <variation>V</variation>
    <location>
        <position position="55"/>
    </location>
</feature>
<feature type="sequence variant" id="VAR_024378" description="In dbSNP:rs9306198." evidence="4">
    <original>P</original>
    <variation>S</variation>
    <location>
        <position position="360"/>
    </location>
</feature>
<feature type="sequence conflict" description="In Ref. 8; AAF03602." evidence="9" ref="8">
    <original>R</original>
    <variation>L</variation>
    <location>
        <position position="170"/>
    </location>
</feature>
<feature type="sequence conflict" description="In Ref. 9; CAB61361." evidence="9" ref="9">
    <original>E</original>
    <variation>Q</variation>
    <location>
        <position position="391"/>
    </location>
</feature>
<accession>Q9BXK5</accession>
<accession>B3KPE7</accession>
<accession>Q96B37</accession>
<accession>Q96IB7</accession>
<accession>Q9BY01</accession>
<accession>Q9HC05</accession>
<accession>Q9UFE0</accession>
<accession>Q9UKN3</accession>
<dbReference type="EMBL" id="AF325209">
    <property type="protein sequence ID" value="AAK27358.1"/>
    <property type="molecule type" value="mRNA"/>
</dbReference>
<dbReference type="EMBL" id="AF246665">
    <property type="protein sequence ID" value="AAK15150.1"/>
    <property type="molecule type" value="mRNA"/>
</dbReference>
<dbReference type="EMBL" id="AF183411">
    <property type="protein sequence ID" value="AAG09680.1"/>
    <property type="status" value="ALT_FRAME"/>
    <property type="molecule type" value="mRNA"/>
</dbReference>
<dbReference type="EMBL" id="CR456521">
    <property type="protein sequence ID" value="CAG30407.1"/>
    <property type="molecule type" value="mRNA"/>
</dbReference>
<dbReference type="EMBL" id="AK056248">
    <property type="protein sequence ID" value="BAG51659.1"/>
    <property type="molecule type" value="mRNA"/>
</dbReference>
<dbReference type="EMBL" id="AC006285">
    <property type="status" value="NOT_ANNOTATED_CDS"/>
    <property type="molecule type" value="Genomic_DNA"/>
</dbReference>
<dbReference type="EMBL" id="BC007658">
    <property type="protein sequence ID" value="AAH07658.1"/>
    <property type="molecule type" value="mRNA"/>
</dbReference>
<dbReference type="EMBL" id="BC016037">
    <property type="protein sequence ID" value="AAH16037.1"/>
    <property type="molecule type" value="mRNA"/>
</dbReference>
<dbReference type="EMBL" id="AF146568">
    <property type="protein sequence ID" value="AAF03602.1"/>
    <property type="status" value="ALT_INIT"/>
    <property type="molecule type" value="mRNA"/>
</dbReference>
<dbReference type="EMBL" id="AL133029">
    <property type="protein sequence ID" value="CAB61361.1"/>
    <property type="molecule type" value="mRNA"/>
</dbReference>
<dbReference type="CCDS" id="CCDS13746.1">
    <molecule id="Q9BXK5-1"/>
</dbReference>
<dbReference type="CCDS" id="CCDS59448.1">
    <molecule id="Q9BXK5-4"/>
</dbReference>
<dbReference type="CCDS" id="CCDS86995.1">
    <molecule id="Q9BXK5-2"/>
</dbReference>
<dbReference type="PIR" id="T42703">
    <property type="entry name" value="T42703"/>
</dbReference>
<dbReference type="RefSeq" id="NP_001257658.1">
    <molecule id="Q9BXK5-4"/>
    <property type="nucleotide sequence ID" value="NM_001270729.2"/>
</dbReference>
<dbReference type="RefSeq" id="NP_001257659.1">
    <molecule id="Q9BXK5-4"/>
    <property type="nucleotide sequence ID" value="NM_001270730.2"/>
</dbReference>
<dbReference type="RefSeq" id="NP_001257660.1">
    <molecule id="Q9BXK5-4"/>
    <property type="nucleotide sequence ID" value="NM_001270731.2"/>
</dbReference>
<dbReference type="RefSeq" id="NP_001350753.1">
    <molecule id="Q9BXK5-2"/>
    <property type="nucleotide sequence ID" value="NM_001363824.1"/>
</dbReference>
<dbReference type="RefSeq" id="NP_056182.2">
    <molecule id="Q9BXK5-1"/>
    <property type="nucleotide sequence ID" value="NM_015367.3"/>
</dbReference>
<dbReference type="RefSeq" id="XP_011544423.1">
    <property type="nucleotide sequence ID" value="XM_011546121.2"/>
</dbReference>
<dbReference type="RefSeq" id="XP_016884217.1">
    <property type="nucleotide sequence ID" value="XM_017028728.1"/>
</dbReference>
<dbReference type="RefSeq" id="XP_016884218.1">
    <property type="nucleotide sequence ID" value="XM_017028729.1"/>
</dbReference>
<dbReference type="RefSeq" id="XP_016884219.1">
    <property type="nucleotide sequence ID" value="XM_017028730.1"/>
</dbReference>
<dbReference type="RefSeq" id="XP_016884220.1">
    <property type="nucleotide sequence ID" value="XM_017028731.1"/>
</dbReference>
<dbReference type="RefSeq" id="XP_016884221.1">
    <property type="nucleotide sequence ID" value="XM_017028732.1"/>
</dbReference>
<dbReference type="RefSeq" id="XP_016884222.1">
    <property type="nucleotide sequence ID" value="XM_017028733.1"/>
</dbReference>
<dbReference type="RefSeq" id="XP_047297245.1">
    <molecule id="Q9BXK5-4"/>
    <property type="nucleotide sequence ID" value="XM_047441289.1"/>
</dbReference>
<dbReference type="RefSeq" id="XP_047297246.1">
    <molecule id="Q9BXK5-2"/>
    <property type="nucleotide sequence ID" value="XM_047441290.1"/>
</dbReference>
<dbReference type="RefSeq" id="XP_054181415.1">
    <molecule id="Q9BXK5-4"/>
    <property type="nucleotide sequence ID" value="XM_054325440.1"/>
</dbReference>
<dbReference type="RefSeq" id="XP_054181416.1">
    <molecule id="Q9BXK5-2"/>
    <property type="nucleotide sequence ID" value="XM_054325441.1"/>
</dbReference>
<dbReference type="BioGRID" id="117285">
    <property type="interactions" value="150"/>
</dbReference>
<dbReference type="DIP" id="DIP-60895N"/>
<dbReference type="FunCoup" id="Q9BXK5">
    <property type="interactions" value="1741"/>
</dbReference>
<dbReference type="IntAct" id="Q9BXK5">
    <property type="interactions" value="97"/>
</dbReference>
<dbReference type="MINT" id="Q9BXK5"/>
<dbReference type="STRING" id="9606.ENSP00000480836"/>
<dbReference type="GlyGen" id="Q9BXK5">
    <property type="glycosylation" value="1 site, 1 O-linked glycan (1 site)"/>
</dbReference>
<dbReference type="iPTMnet" id="Q9BXK5"/>
<dbReference type="PhosphoSitePlus" id="Q9BXK5"/>
<dbReference type="SwissPalm" id="Q9BXK5"/>
<dbReference type="BioMuta" id="BCL2L13"/>
<dbReference type="DMDM" id="23396740"/>
<dbReference type="jPOST" id="Q9BXK5"/>
<dbReference type="MassIVE" id="Q9BXK5"/>
<dbReference type="PaxDb" id="9606-ENSP00000480836"/>
<dbReference type="PeptideAtlas" id="Q9BXK5"/>
<dbReference type="ProteomicsDB" id="3529"/>
<dbReference type="ProteomicsDB" id="79446">
    <molecule id="Q9BXK5-1"/>
</dbReference>
<dbReference type="ProteomicsDB" id="79447">
    <molecule id="Q9BXK5-2"/>
</dbReference>
<dbReference type="Pumba" id="Q9BXK5"/>
<dbReference type="Antibodypedia" id="3673">
    <property type="antibodies" value="267 antibodies from 35 providers"/>
</dbReference>
<dbReference type="DNASU" id="23786"/>
<dbReference type="Ensembl" id="ENST00000317582.10">
    <molecule id="Q9BXK5-1"/>
    <property type="protein sequence ID" value="ENSP00000318883.5"/>
    <property type="gene ID" value="ENSG00000099968.18"/>
</dbReference>
<dbReference type="Ensembl" id="ENST00000399782.5">
    <molecule id="Q9BXK5-2"/>
    <property type="protein sequence ID" value="ENSP00000382682.1"/>
    <property type="gene ID" value="ENSG00000099968.18"/>
</dbReference>
<dbReference type="Ensembl" id="ENST00000418951.6">
    <molecule id="Q9BXK5-4"/>
    <property type="protein sequence ID" value="ENSP00000410019.3"/>
    <property type="gene ID" value="ENSG00000099968.18"/>
</dbReference>
<dbReference type="Ensembl" id="ENST00000493680.5">
    <molecule id="Q9BXK5-2"/>
    <property type="protein sequence ID" value="ENSP00000434764.1"/>
    <property type="gene ID" value="ENSG00000099968.18"/>
</dbReference>
<dbReference type="Ensembl" id="ENST00000543133.5">
    <molecule id="Q9BXK5-4"/>
    <property type="protein sequence ID" value="ENSP00000437667.1"/>
    <property type="gene ID" value="ENSG00000099968.18"/>
</dbReference>
<dbReference type="GeneID" id="23786"/>
<dbReference type="KEGG" id="hsa:23786"/>
<dbReference type="MANE-Select" id="ENST00000317582.10">
    <property type="protein sequence ID" value="ENSP00000318883.5"/>
    <property type="RefSeq nucleotide sequence ID" value="NM_015367.4"/>
    <property type="RefSeq protein sequence ID" value="NP_056182.2"/>
</dbReference>
<dbReference type="UCSC" id="uc002zmu.4">
    <molecule id="Q9BXK5-1"/>
    <property type="organism name" value="human"/>
</dbReference>
<dbReference type="AGR" id="HGNC:17164"/>
<dbReference type="CTD" id="23786"/>
<dbReference type="DisGeNET" id="23786"/>
<dbReference type="GeneCards" id="BCL2L13"/>
<dbReference type="HGNC" id="HGNC:17164">
    <property type="gene designation" value="BCL2L13"/>
</dbReference>
<dbReference type="HPA" id="ENSG00000099968">
    <property type="expression patterns" value="Tissue enhanced (skeletal)"/>
</dbReference>
<dbReference type="MIM" id="619822">
    <property type="type" value="gene"/>
</dbReference>
<dbReference type="neXtProt" id="NX_Q9BXK5"/>
<dbReference type="OpenTargets" id="ENSG00000099968"/>
<dbReference type="PharmGKB" id="PA134912159"/>
<dbReference type="VEuPathDB" id="HostDB:ENSG00000099968"/>
<dbReference type="eggNOG" id="ENOG502R6AP">
    <property type="taxonomic scope" value="Eukaryota"/>
</dbReference>
<dbReference type="GeneTree" id="ENSGT00390000015552"/>
<dbReference type="HOGENOM" id="CLU_032647_2_0_1"/>
<dbReference type="InParanoid" id="Q9BXK5"/>
<dbReference type="OMA" id="MHEALQT"/>
<dbReference type="OrthoDB" id="8959856at2759"/>
<dbReference type="PAN-GO" id="Q9BXK5">
    <property type="GO annotations" value="1 GO annotation based on evolutionary models"/>
</dbReference>
<dbReference type="PhylomeDB" id="Q9BXK5"/>
<dbReference type="TreeFam" id="TF330744"/>
<dbReference type="PathwayCommons" id="Q9BXK5"/>
<dbReference type="SignaLink" id="Q9BXK5"/>
<dbReference type="BioGRID-ORCS" id="23786">
    <property type="hits" value="17 hits in 1170 CRISPR screens"/>
</dbReference>
<dbReference type="ChiTaRS" id="BCL2L13">
    <property type="organism name" value="human"/>
</dbReference>
<dbReference type="GeneWiki" id="BCL2L13"/>
<dbReference type="GenomeRNAi" id="23786"/>
<dbReference type="Pharos" id="Q9BXK5">
    <property type="development level" value="Tbio"/>
</dbReference>
<dbReference type="PRO" id="PR:Q9BXK5"/>
<dbReference type="Proteomes" id="UP000005640">
    <property type="component" value="Chromosome 22"/>
</dbReference>
<dbReference type="RNAct" id="Q9BXK5">
    <property type="molecule type" value="protein"/>
</dbReference>
<dbReference type="Bgee" id="ENSG00000099968">
    <property type="expression patterns" value="Expressed in secondary oocyte and 205 other cell types or tissues"/>
</dbReference>
<dbReference type="ExpressionAtlas" id="Q9BXK5">
    <property type="expression patterns" value="baseline and differential"/>
</dbReference>
<dbReference type="GO" id="GO:0016020">
    <property type="term" value="C:membrane"/>
    <property type="evidence" value="ECO:0000314"/>
    <property type="project" value="UniProtKB"/>
</dbReference>
<dbReference type="GO" id="GO:0031966">
    <property type="term" value="C:mitochondrial membrane"/>
    <property type="evidence" value="ECO:0007669"/>
    <property type="project" value="UniProtKB-SubCell"/>
</dbReference>
<dbReference type="GO" id="GO:0005739">
    <property type="term" value="C:mitochondrion"/>
    <property type="evidence" value="ECO:0006056"/>
    <property type="project" value="FlyBase"/>
</dbReference>
<dbReference type="GO" id="GO:0005634">
    <property type="term" value="C:nucleus"/>
    <property type="evidence" value="ECO:0007669"/>
    <property type="project" value="UniProtKB-SubCell"/>
</dbReference>
<dbReference type="GO" id="GO:0008656">
    <property type="term" value="F:cysteine-type endopeptidase activator activity involved in apoptotic process"/>
    <property type="evidence" value="ECO:0000303"/>
    <property type="project" value="UniProtKB"/>
</dbReference>
<dbReference type="GO" id="GO:0006915">
    <property type="term" value="P:apoptotic process"/>
    <property type="evidence" value="ECO:0000303"/>
    <property type="project" value="UniProtKB"/>
</dbReference>
<dbReference type="GO" id="GO:0061621">
    <property type="term" value="P:canonical glycolysis"/>
    <property type="evidence" value="ECO:0007669"/>
    <property type="project" value="Ensembl"/>
</dbReference>
<dbReference type="GO" id="GO:0045444">
    <property type="term" value="P:fat cell differentiation"/>
    <property type="evidence" value="ECO:0007669"/>
    <property type="project" value="Ensembl"/>
</dbReference>
<dbReference type="GO" id="GO:0007005">
    <property type="term" value="P:mitochondrion organization"/>
    <property type="evidence" value="ECO:0007669"/>
    <property type="project" value="Ensembl"/>
</dbReference>
<dbReference type="GO" id="GO:0000423">
    <property type="term" value="P:mitophagy"/>
    <property type="evidence" value="ECO:0007669"/>
    <property type="project" value="Ensembl"/>
</dbReference>
<dbReference type="GO" id="GO:0006119">
    <property type="term" value="P:oxidative phosphorylation"/>
    <property type="evidence" value="ECO:0007669"/>
    <property type="project" value="Ensembl"/>
</dbReference>
<dbReference type="GO" id="GO:0042981">
    <property type="term" value="P:regulation of apoptotic process"/>
    <property type="evidence" value="ECO:0007669"/>
    <property type="project" value="InterPro"/>
</dbReference>
<dbReference type="FunFam" id="1.10.437.10:FF:000011">
    <property type="entry name" value="BCL2 like 13"/>
    <property type="match status" value="1"/>
</dbReference>
<dbReference type="Gene3D" id="1.10.437.10">
    <property type="entry name" value="Blc2-like"/>
    <property type="match status" value="1"/>
</dbReference>
<dbReference type="InterPro" id="IPR036834">
    <property type="entry name" value="Bcl-2-like_sf"/>
</dbReference>
<dbReference type="InterPro" id="IPR046371">
    <property type="entry name" value="Bcl-2_BH1-3"/>
</dbReference>
<dbReference type="InterPro" id="IPR002475">
    <property type="entry name" value="Bcl2-like"/>
</dbReference>
<dbReference type="InterPro" id="IPR042398">
    <property type="entry name" value="BCL2L13"/>
</dbReference>
<dbReference type="PANTHER" id="PTHR15758">
    <property type="entry name" value="BCL-2-LIKE PROTEIN 13"/>
    <property type="match status" value="1"/>
</dbReference>
<dbReference type="PANTHER" id="PTHR15758:SF2">
    <property type="entry name" value="BCL-2-LIKE PROTEIN 13"/>
    <property type="match status" value="1"/>
</dbReference>
<dbReference type="Pfam" id="PF00452">
    <property type="entry name" value="Bcl-2"/>
    <property type="match status" value="1"/>
</dbReference>
<dbReference type="SUPFAM" id="SSF56854">
    <property type="entry name" value="Bcl-2 inhibitors of programmed cell death"/>
    <property type="match status" value="1"/>
</dbReference>
<dbReference type="PROSITE" id="PS50062">
    <property type="entry name" value="BCL2_FAMILY"/>
    <property type="match status" value="1"/>
</dbReference>
<protein>
    <recommendedName>
        <fullName>Bcl-2-like protein 13</fullName>
        <shortName>Bcl2-L-13</shortName>
    </recommendedName>
    <alternativeName>
        <fullName>Bcl-rambo</fullName>
    </alternativeName>
    <alternativeName>
        <fullName>Protein Mil1</fullName>
    </alternativeName>
</protein>
<reference key="1">
    <citation type="journal article" date="2001" name="J. Biol. Chem.">
        <title>Bcl-rambo, a novel Bcl-2 homologue that induces apoptosis via its unique C-terminal extension.</title>
        <authorList>
            <person name="Kataoka T."/>
            <person name="Holler N."/>
            <person name="Micheau O."/>
            <person name="Martinon F."/>
            <person name="Tinel A."/>
            <person name="Hofmann K."/>
            <person name="Tschopp J."/>
        </authorList>
    </citation>
    <scope>NUCLEOTIDE SEQUENCE [MRNA] (ISOFORM 2)</scope>
</reference>
<reference key="2">
    <citation type="journal article" date="2001" name="Genome Res.">
        <title>Analysis of the cat eye syndrome critical region in humans and the region of conserved synteny in mice: a search for candidate genes at or near the human chromosome 22 pericentromere.</title>
        <authorList>
            <person name="Footz T.K."/>
            <person name="Brinkman-Mills P."/>
            <person name="Banting G.S."/>
            <person name="Maier S.A."/>
            <person name="Riazi M.A."/>
            <person name="Bridgland L.J."/>
            <person name="Hu S."/>
            <person name="Birren B."/>
            <person name="Minoshima S."/>
            <person name="Shimizu N."/>
            <person name="Pan H."/>
            <person name="Nguyen T."/>
            <person name="Fang F."/>
            <person name="Fu Y."/>
            <person name="Ray L."/>
            <person name="Wu H."/>
            <person name="Shaull S."/>
            <person name="Phan S."/>
            <person name="Yao Z."/>
            <person name="Chen F."/>
            <person name="Huan A."/>
            <person name="Hu P."/>
            <person name="Wang Q."/>
            <person name="Loh P."/>
            <person name="Qi S."/>
            <person name="Roe B.A."/>
            <person name="McDermid H.E."/>
        </authorList>
    </citation>
    <scope>NUCLEOTIDE SEQUENCE [MRNA] (ISOFORM 1)</scope>
</reference>
<reference key="3">
    <citation type="submission" date="1999-09" db="EMBL/GenBank/DDBJ databases">
        <title>A novel gene expressed in human pheochromocytoma.</title>
        <authorList>
            <person name="Li Y."/>
            <person name="Peng Y."/>
            <person name="Li N."/>
            <person name="Gu W."/>
            <person name="Han Z."/>
            <person name="Fu G."/>
            <person name="Chen Z."/>
        </authorList>
    </citation>
    <scope>NUCLEOTIDE SEQUENCE [LARGE SCALE MRNA] (ISOFORM 1)</scope>
    <source>
        <tissue>Pheochromocytoma</tissue>
    </source>
</reference>
<reference key="4">
    <citation type="journal article" date="2004" name="Genome Biol.">
        <title>A genome annotation-driven approach to cloning the human ORFeome.</title>
        <authorList>
            <person name="Collins J.E."/>
            <person name="Wright C.L."/>
            <person name="Edwards C.A."/>
            <person name="Davis M.P."/>
            <person name="Grinham J.A."/>
            <person name="Cole C.G."/>
            <person name="Goward M.E."/>
            <person name="Aguado B."/>
            <person name="Mallya M."/>
            <person name="Mokrab Y."/>
            <person name="Huckle E.J."/>
            <person name="Beare D.M."/>
            <person name="Dunham I."/>
        </authorList>
    </citation>
    <scope>NUCLEOTIDE SEQUENCE [LARGE SCALE MRNA] (ISOFORM 1)</scope>
</reference>
<reference key="5">
    <citation type="journal article" date="2004" name="Nat. Genet.">
        <title>Complete sequencing and characterization of 21,243 full-length human cDNAs.</title>
        <authorList>
            <person name="Ota T."/>
            <person name="Suzuki Y."/>
            <person name="Nishikawa T."/>
            <person name="Otsuki T."/>
            <person name="Sugiyama T."/>
            <person name="Irie R."/>
            <person name="Wakamatsu A."/>
            <person name="Hayashi K."/>
            <person name="Sato H."/>
            <person name="Nagai K."/>
            <person name="Kimura K."/>
            <person name="Makita H."/>
            <person name="Sekine M."/>
            <person name="Obayashi M."/>
            <person name="Nishi T."/>
            <person name="Shibahara T."/>
            <person name="Tanaka T."/>
            <person name="Ishii S."/>
            <person name="Yamamoto J."/>
            <person name="Saito K."/>
            <person name="Kawai Y."/>
            <person name="Isono Y."/>
            <person name="Nakamura Y."/>
            <person name="Nagahari K."/>
            <person name="Murakami K."/>
            <person name="Yasuda T."/>
            <person name="Iwayanagi T."/>
            <person name="Wagatsuma M."/>
            <person name="Shiratori A."/>
            <person name="Sudo H."/>
            <person name="Hosoiri T."/>
            <person name="Kaku Y."/>
            <person name="Kodaira H."/>
            <person name="Kondo H."/>
            <person name="Sugawara M."/>
            <person name="Takahashi M."/>
            <person name="Kanda K."/>
            <person name="Yokoi T."/>
            <person name="Furuya T."/>
            <person name="Kikkawa E."/>
            <person name="Omura Y."/>
            <person name="Abe K."/>
            <person name="Kamihara K."/>
            <person name="Katsuta N."/>
            <person name="Sato K."/>
            <person name="Tanikawa M."/>
            <person name="Yamazaki M."/>
            <person name="Ninomiya K."/>
            <person name="Ishibashi T."/>
            <person name="Yamashita H."/>
            <person name="Murakawa K."/>
            <person name="Fujimori K."/>
            <person name="Tanai H."/>
            <person name="Kimata M."/>
            <person name="Watanabe M."/>
            <person name="Hiraoka S."/>
            <person name="Chiba Y."/>
            <person name="Ishida S."/>
            <person name="Ono Y."/>
            <person name="Takiguchi S."/>
            <person name="Watanabe S."/>
            <person name="Yosida M."/>
            <person name="Hotuta T."/>
            <person name="Kusano J."/>
            <person name="Kanehori K."/>
            <person name="Takahashi-Fujii A."/>
            <person name="Hara H."/>
            <person name="Tanase T.-O."/>
            <person name="Nomura Y."/>
            <person name="Togiya S."/>
            <person name="Komai F."/>
            <person name="Hara R."/>
            <person name="Takeuchi K."/>
            <person name="Arita M."/>
            <person name="Imose N."/>
            <person name="Musashino K."/>
            <person name="Yuuki H."/>
            <person name="Oshima A."/>
            <person name="Sasaki N."/>
            <person name="Aotsuka S."/>
            <person name="Yoshikawa Y."/>
            <person name="Matsunawa H."/>
            <person name="Ichihara T."/>
            <person name="Shiohata N."/>
            <person name="Sano S."/>
            <person name="Moriya S."/>
            <person name="Momiyama H."/>
            <person name="Satoh N."/>
            <person name="Takami S."/>
            <person name="Terashima Y."/>
            <person name="Suzuki O."/>
            <person name="Nakagawa S."/>
            <person name="Senoh A."/>
            <person name="Mizoguchi H."/>
            <person name="Goto Y."/>
            <person name="Shimizu F."/>
            <person name="Wakebe H."/>
            <person name="Hishigaki H."/>
            <person name="Watanabe T."/>
            <person name="Sugiyama A."/>
            <person name="Takemoto M."/>
            <person name="Kawakami B."/>
            <person name="Yamazaki M."/>
            <person name="Watanabe K."/>
            <person name="Kumagai A."/>
            <person name="Itakura S."/>
            <person name="Fukuzumi Y."/>
            <person name="Fujimori Y."/>
            <person name="Komiyama M."/>
            <person name="Tashiro H."/>
            <person name="Tanigami A."/>
            <person name="Fujiwara T."/>
            <person name="Ono T."/>
            <person name="Yamada K."/>
            <person name="Fujii Y."/>
            <person name="Ozaki K."/>
            <person name="Hirao M."/>
            <person name="Ohmori Y."/>
            <person name="Kawabata A."/>
            <person name="Hikiji T."/>
            <person name="Kobatake N."/>
            <person name="Inagaki H."/>
            <person name="Ikema Y."/>
            <person name="Okamoto S."/>
            <person name="Okitani R."/>
            <person name="Kawakami T."/>
            <person name="Noguchi S."/>
            <person name="Itoh T."/>
            <person name="Shigeta K."/>
            <person name="Senba T."/>
            <person name="Matsumura K."/>
            <person name="Nakajima Y."/>
            <person name="Mizuno T."/>
            <person name="Morinaga M."/>
            <person name="Sasaki M."/>
            <person name="Togashi T."/>
            <person name="Oyama M."/>
            <person name="Hata H."/>
            <person name="Watanabe M."/>
            <person name="Komatsu T."/>
            <person name="Mizushima-Sugano J."/>
            <person name="Satoh T."/>
            <person name="Shirai Y."/>
            <person name="Takahashi Y."/>
            <person name="Nakagawa K."/>
            <person name="Okumura K."/>
            <person name="Nagase T."/>
            <person name="Nomura N."/>
            <person name="Kikuchi H."/>
            <person name="Masuho Y."/>
            <person name="Yamashita R."/>
            <person name="Nakai K."/>
            <person name="Yada T."/>
            <person name="Nakamura Y."/>
            <person name="Ohara O."/>
            <person name="Isogai T."/>
            <person name="Sugano S."/>
        </authorList>
    </citation>
    <scope>NUCLEOTIDE SEQUENCE [LARGE SCALE MRNA] (ISOFORM 3)</scope>
    <source>
        <tissue>Teratocarcinoma</tissue>
    </source>
</reference>
<reference key="6">
    <citation type="journal article" date="1999" name="Nature">
        <title>The DNA sequence of human chromosome 22.</title>
        <authorList>
            <person name="Dunham I."/>
            <person name="Hunt A.R."/>
            <person name="Collins J.E."/>
            <person name="Bruskiewich R."/>
            <person name="Beare D.M."/>
            <person name="Clamp M."/>
            <person name="Smink L.J."/>
            <person name="Ainscough R."/>
            <person name="Almeida J.P."/>
            <person name="Babbage A.K."/>
            <person name="Bagguley C."/>
            <person name="Bailey J."/>
            <person name="Barlow K.F."/>
            <person name="Bates K.N."/>
            <person name="Beasley O.P."/>
            <person name="Bird C.P."/>
            <person name="Blakey S.E."/>
            <person name="Bridgeman A.M."/>
            <person name="Buck D."/>
            <person name="Burgess J."/>
            <person name="Burrill W.D."/>
            <person name="Burton J."/>
            <person name="Carder C."/>
            <person name="Carter N.P."/>
            <person name="Chen Y."/>
            <person name="Clark G."/>
            <person name="Clegg S.M."/>
            <person name="Cobley V.E."/>
            <person name="Cole C.G."/>
            <person name="Collier R.E."/>
            <person name="Connor R."/>
            <person name="Conroy D."/>
            <person name="Corby N.R."/>
            <person name="Coville G.J."/>
            <person name="Cox A.V."/>
            <person name="Davis J."/>
            <person name="Dawson E."/>
            <person name="Dhami P.D."/>
            <person name="Dockree C."/>
            <person name="Dodsworth S.J."/>
            <person name="Durbin R.M."/>
            <person name="Ellington A.G."/>
            <person name="Evans K.L."/>
            <person name="Fey J.M."/>
            <person name="Fleming K."/>
            <person name="French L."/>
            <person name="Garner A.A."/>
            <person name="Gilbert J.G.R."/>
            <person name="Goward M.E."/>
            <person name="Grafham D.V."/>
            <person name="Griffiths M.N.D."/>
            <person name="Hall C."/>
            <person name="Hall R.E."/>
            <person name="Hall-Tamlyn G."/>
            <person name="Heathcott R.W."/>
            <person name="Ho S."/>
            <person name="Holmes S."/>
            <person name="Hunt S.E."/>
            <person name="Jones M.C."/>
            <person name="Kershaw J."/>
            <person name="Kimberley A.M."/>
            <person name="King A."/>
            <person name="Laird G.K."/>
            <person name="Langford C.F."/>
            <person name="Leversha M.A."/>
            <person name="Lloyd C."/>
            <person name="Lloyd D.M."/>
            <person name="Martyn I.D."/>
            <person name="Mashreghi-Mohammadi M."/>
            <person name="Matthews L.H."/>
            <person name="Mccann O.T."/>
            <person name="Mcclay J."/>
            <person name="Mclaren S."/>
            <person name="McMurray A.A."/>
            <person name="Milne S.A."/>
            <person name="Mortimore B.J."/>
            <person name="Odell C.N."/>
            <person name="Pavitt R."/>
            <person name="Pearce A.V."/>
            <person name="Pearson D."/>
            <person name="Phillimore B.J.C.T."/>
            <person name="Phillips S.H."/>
            <person name="Plumb R.W."/>
            <person name="Ramsay H."/>
            <person name="Ramsey Y."/>
            <person name="Rogers L."/>
            <person name="Ross M.T."/>
            <person name="Scott C.E."/>
            <person name="Sehra H.K."/>
            <person name="Skuce C.D."/>
            <person name="Smalley S."/>
            <person name="Smith M.L."/>
            <person name="Soderlund C."/>
            <person name="Spragon L."/>
            <person name="Steward C.A."/>
            <person name="Sulston J.E."/>
            <person name="Swann R.M."/>
            <person name="Vaudin M."/>
            <person name="Wall M."/>
            <person name="Wallis J.M."/>
            <person name="Whiteley M.N."/>
            <person name="Willey D.L."/>
            <person name="Williams L."/>
            <person name="Williams S.A."/>
            <person name="Williamson H."/>
            <person name="Wilmer T.E."/>
            <person name="Wilming L."/>
            <person name="Wright C.L."/>
            <person name="Hubbard T."/>
            <person name="Bentley D.R."/>
            <person name="Beck S."/>
            <person name="Rogers J."/>
            <person name="Shimizu N."/>
            <person name="Minoshima S."/>
            <person name="Kawasaki K."/>
            <person name="Sasaki T."/>
            <person name="Asakawa S."/>
            <person name="Kudoh J."/>
            <person name="Shintani A."/>
            <person name="Shibuya K."/>
            <person name="Yoshizaki Y."/>
            <person name="Aoki N."/>
            <person name="Mitsuyama S."/>
            <person name="Roe B.A."/>
            <person name="Chen F."/>
            <person name="Chu L."/>
            <person name="Crabtree J."/>
            <person name="Deschamps S."/>
            <person name="Do A."/>
            <person name="Do T."/>
            <person name="Dorman A."/>
            <person name="Fang F."/>
            <person name="Fu Y."/>
            <person name="Hu P."/>
            <person name="Hua A."/>
            <person name="Kenton S."/>
            <person name="Lai H."/>
            <person name="Lao H.I."/>
            <person name="Lewis J."/>
            <person name="Lewis S."/>
            <person name="Lin S.-P."/>
            <person name="Loh P."/>
            <person name="Malaj E."/>
            <person name="Nguyen T."/>
            <person name="Pan H."/>
            <person name="Phan S."/>
            <person name="Qi S."/>
            <person name="Qian Y."/>
            <person name="Ray L."/>
            <person name="Ren Q."/>
            <person name="Shaull S."/>
            <person name="Sloan D."/>
            <person name="Song L."/>
            <person name="Wang Q."/>
            <person name="Wang Y."/>
            <person name="Wang Z."/>
            <person name="White J."/>
            <person name="Willingham D."/>
            <person name="Wu H."/>
            <person name="Yao Z."/>
            <person name="Zhan M."/>
            <person name="Zhang G."/>
            <person name="Chissoe S."/>
            <person name="Murray J."/>
            <person name="Miller N."/>
            <person name="Minx P."/>
            <person name="Fulton R."/>
            <person name="Johnson D."/>
            <person name="Bemis G."/>
            <person name="Bentley D."/>
            <person name="Bradshaw H."/>
            <person name="Bourne S."/>
            <person name="Cordes M."/>
            <person name="Du Z."/>
            <person name="Fulton L."/>
            <person name="Goela D."/>
            <person name="Graves T."/>
            <person name="Hawkins J."/>
            <person name="Hinds K."/>
            <person name="Kemp K."/>
            <person name="Latreille P."/>
            <person name="Layman D."/>
            <person name="Ozersky P."/>
            <person name="Rohlfing T."/>
            <person name="Scheet P."/>
            <person name="Walker C."/>
            <person name="Wamsley A."/>
            <person name="Wohldmann P."/>
            <person name="Pepin K."/>
            <person name="Nelson J."/>
            <person name="Korf I."/>
            <person name="Bedell J.A."/>
            <person name="Hillier L.W."/>
            <person name="Mardis E."/>
            <person name="Waterston R."/>
            <person name="Wilson R."/>
            <person name="Emanuel B.S."/>
            <person name="Shaikh T."/>
            <person name="Kurahashi H."/>
            <person name="Saitta S."/>
            <person name="Budarf M.L."/>
            <person name="McDermid H.E."/>
            <person name="Johnson A."/>
            <person name="Wong A.C.C."/>
            <person name="Morrow B.E."/>
            <person name="Edelmann L."/>
            <person name="Kim U.J."/>
            <person name="Shizuya H."/>
            <person name="Simon M.I."/>
            <person name="Dumanski J.P."/>
            <person name="Peyrard M."/>
            <person name="Kedra D."/>
            <person name="Seroussi E."/>
            <person name="Fransson I."/>
            <person name="Tapia I."/>
            <person name="Bruder C.E."/>
            <person name="O'Brien K.P."/>
            <person name="Wilkinson P."/>
            <person name="Bodenteich A."/>
            <person name="Hartman K."/>
            <person name="Hu X."/>
            <person name="Khan A.S."/>
            <person name="Lane L."/>
            <person name="Tilahun Y."/>
            <person name="Wright H."/>
        </authorList>
    </citation>
    <scope>NUCLEOTIDE SEQUENCE [LARGE SCALE GENOMIC DNA]</scope>
</reference>
<reference key="7">
    <citation type="journal article" date="2004" name="Genome Res.">
        <title>The status, quality, and expansion of the NIH full-length cDNA project: the Mammalian Gene Collection (MGC).</title>
        <authorList>
            <consortium name="The MGC Project Team"/>
        </authorList>
    </citation>
    <scope>NUCLEOTIDE SEQUENCE [LARGE SCALE MRNA] (ISOFORM 2)</scope>
    <scope>VARIANT SER-360</scope>
    <source>
        <tissue>Eye</tissue>
        <tissue>Skin</tissue>
    </source>
</reference>
<reference key="8">
    <citation type="submission" date="1999-04" db="EMBL/GenBank/DDBJ databases">
        <title>Mil1, a novel human gene encoding mitochondria located protein promoting cell survival.</title>
        <authorList>
            <person name="Zemskova M.Y."/>
            <person name="Lilly M."/>
            <person name="Escher A.P."/>
        </authorList>
    </citation>
    <scope>NUCLEOTIDE SEQUENCE [MRNA] OF 77-485 (ISOFORM 2)</scope>
    <source>
        <tissue>Glial tumor</tissue>
    </source>
</reference>
<reference key="9">
    <citation type="journal article" date="2007" name="BMC Genomics">
        <title>The full-ORF clone resource of the German cDNA consortium.</title>
        <authorList>
            <person name="Bechtel S."/>
            <person name="Rosenfelder H."/>
            <person name="Duda A."/>
            <person name="Schmidt C.P."/>
            <person name="Ernst U."/>
            <person name="Wellenreuther R."/>
            <person name="Mehrle A."/>
            <person name="Schuster C."/>
            <person name="Bahr A."/>
            <person name="Bloecker H."/>
            <person name="Heubner D."/>
            <person name="Hoerlein A."/>
            <person name="Michel G."/>
            <person name="Wedler H."/>
            <person name="Koehrer K."/>
            <person name="Ottenwaelder B."/>
            <person name="Poustka A."/>
            <person name="Wiemann S."/>
            <person name="Schupp I."/>
        </authorList>
    </citation>
    <scope>NUCLEOTIDE SEQUENCE [LARGE SCALE MRNA] OF 183-485 (ISOFORM 2)</scope>
    <source>
        <tissue>Testis</tissue>
    </source>
</reference>
<reference key="10">
    <citation type="journal article" date="2008" name="Proc. Natl. Acad. Sci. U.S.A.">
        <title>A quantitative atlas of mitotic phosphorylation.</title>
        <authorList>
            <person name="Dephoure N."/>
            <person name="Zhou C."/>
            <person name="Villen J."/>
            <person name="Beausoleil S.A."/>
            <person name="Bakalarski C.E."/>
            <person name="Elledge S.J."/>
            <person name="Gygi S.P."/>
        </authorList>
    </citation>
    <scope>PHOSPHORYLATION [LARGE SCALE ANALYSIS] AT SER-38; SER-420 AND SER-426</scope>
    <scope>VARIANT [LARGE SCALE ANALYSIS] ARG-46</scope>
    <scope>IDENTIFICATION BY MASS SPECTROMETRY [LARGE SCALE ANALYSIS]</scope>
    <source>
        <tissue>Cervix carcinoma</tissue>
    </source>
</reference>
<reference key="11">
    <citation type="journal article" date="2010" name="Sci. Signal.">
        <title>Quantitative phosphoproteomics reveals widespread full phosphorylation site occupancy during mitosis.</title>
        <authorList>
            <person name="Olsen J.V."/>
            <person name="Vermeulen M."/>
            <person name="Santamaria A."/>
            <person name="Kumar C."/>
            <person name="Miller M.L."/>
            <person name="Jensen L.J."/>
            <person name="Gnad F."/>
            <person name="Cox J."/>
            <person name="Jensen T.S."/>
            <person name="Nigg E.A."/>
            <person name="Brunak S."/>
            <person name="Mann M."/>
        </authorList>
    </citation>
    <scope>PHOSPHORYLATION [LARGE SCALE ANALYSIS] AT SER-420; SER-426 AND SER-429</scope>
    <scope>IDENTIFICATION BY MASS SPECTROMETRY [LARGE SCALE ANALYSIS]</scope>
    <source>
        <tissue>Cervix carcinoma</tissue>
    </source>
</reference>
<reference key="12">
    <citation type="journal article" date="2011" name="BMC Syst. Biol.">
        <title>Initial characterization of the human central proteome.</title>
        <authorList>
            <person name="Burkard T.R."/>
            <person name="Planyavsky M."/>
            <person name="Kaupe I."/>
            <person name="Breitwieser F.P."/>
            <person name="Buerckstuemmer T."/>
            <person name="Bennett K.L."/>
            <person name="Superti-Furga G."/>
            <person name="Colinge J."/>
        </authorList>
    </citation>
    <scope>IDENTIFICATION BY MASS SPECTROMETRY [LARGE SCALE ANALYSIS]</scope>
</reference>
<reference key="13">
    <citation type="journal article" date="2011" name="Sci. Signal.">
        <title>System-wide temporal characterization of the proteome and phosphoproteome of human embryonic stem cell differentiation.</title>
        <authorList>
            <person name="Rigbolt K.T."/>
            <person name="Prokhorova T.A."/>
            <person name="Akimov V."/>
            <person name="Henningsen J."/>
            <person name="Johansen P.T."/>
            <person name="Kratchmarova I."/>
            <person name="Kassem M."/>
            <person name="Mann M."/>
            <person name="Olsen J.V."/>
            <person name="Blagoev B."/>
        </authorList>
    </citation>
    <scope>PHOSPHORYLATION [LARGE SCALE ANALYSIS] AT SER-420 AND SER-426</scope>
    <scope>IDENTIFICATION BY MASS SPECTROMETRY [LARGE SCALE ANALYSIS]</scope>
</reference>
<reference key="14">
    <citation type="journal article" date="2013" name="J. Proteome Res.">
        <title>Toward a comprehensive characterization of a human cancer cell phosphoproteome.</title>
        <authorList>
            <person name="Zhou H."/>
            <person name="Di Palma S."/>
            <person name="Preisinger C."/>
            <person name="Peng M."/>
            <person name="Polat A.N."/>
            <person name="Heck A.J."/>
            <person name="Mohammed S."/>
        </authorList>
    </citation>
    <scope>PHOSPHORYLATION [LARGE SCALE ANALYSIS] AT SER-303; SER-420; SER-426 AND SER-444</scope>
    <scope>IDENTIFICATION BY MASS SPECTROMETRY [LARGE SCALE ANALYSIS]</scope>
    <source>
        <tissue>Cervix carcinoma</tissue>
        <tissue>Erythroleukemia</tissue>
    </source>
</reference>
<reference key="15">
    <citation type="journal article" date="2014" name="J. Proteomics">
        <title>An enzyme assisted RP-RPLC approach for in-depth analysis of human liver phosphoproteome.</title>
        <authorList>
            <person name="Bian Y."/>
            <person name="Song C."/>
            <person name="Cheng K."/>
            <person name="Dong M."/>
            <person name="Wang F."/>
            <person name="Huang J."/>
            <person name="Sun D."/>
            <person name="Wang L."/>
            <person name="Ye M."/>
            <person name="Zou H."/>
        </authorList>
    </citation>
    <scope>PHOSPHORYLATION [LARGE SCALE ANALYSIS] AT SER-259; SER-261; SER-326 AND SER-410</scope>
    <scope>IDENTIFICATION BY MASS SPECTROMETRY [LARGE SCALE ANALYSIS]</scope>
    <source>
        <tissue>Liver</tissue>
    </source>
</reference>
<reference key="16">
    <citation type="journal article" date="2015" name="Proteomics">
        <title>N-terminome analysis of the human mitochondrial proteome.</title>
        <authorList>
            <person name="Vaca Jacome A.S."/>
            <person name="Rabilloud T."/>
            <person name="Schaeffer-Reiss C."/>
            <person name="Rompais M."/>
            <person name="Ayoub D."/>
            <person name="Lane L."/>
            <person name="Bairoch A."/>
            <person name="Van Dorsselaer A."/>
            <person name="Carapito C."/>
        </authorList>
    </citation>
    <scope>IDENTIFICATION BY MASS SPECTROMETRY [LARGE SCALE ANALYSIS]</scope>
</reference>
<gene>
    <name type="primary">BCL2L13</name>
    <name type="synonym">MIL1</name>
    <name type="ORF">CD003</name>
</gene>
<evidence type="ECO:0000250" key="1">
    <source>
        <dbReference type="UniProtKB" id="P59017"/>
    </source>
</evidence>
<evidence type="ECO:0000255" key="2"/>
<evidence type="ECO:0000256" key="3">
    <source>
        <dbReference type="SAM" id="MobiDB-lite"/>
    </source>
</evidence>
<evidence type="ECO:0000269" key="4">
    <source>
    </source>
</evidence>
<evidence type="ECO:0000303" key="5">
    <source>
    </source>
</evidence>
<evidence type="ECO:0000303" key="6">
    <source>
    </source>
</evidence>
<evidence type="ECO:0000303" key="7">
    <source>
    </source>
</evidence>
<evidence type="ECO:0000303" key="8">
    <source ref="3"/>
</evidence>
<evidence type="ECO:0000305" key="9"/>
<evidence type="ECO:0007744" key="10">
    <source>
    </source>
</evidence>
<evidence type="ECO:0007744" key="11">
    <source>
    </source>
</evidence>
<evidence type="ECO:0007744" key="12">
    <source>
    </source>
</evidence>
<evidence type="ECO:0007744" key="13">
    <source>
    </source>
</evidence>
<evidence type="ECO:0007744" key="14">
    <source>
    </source>
</evidence>
<keyword id="KW-0025">Alternative splicing</keyword>
<keyword id="KW-0053">Apoptosis</keyword>
<keyword id="KW-0472">Membrane</keyword>
<keyword id="KW-0496">Mitochondrion</keyword>
<keyword id="KW-0539">Nucleus</keyword>
<keyword id="KW-0597">Phosphoprotein</keyword>
<keyword id="KW-1267">Proteomics identification</keyword>
<keyword id="KW-1185">Reference proteome</keyword>
<keyword id="KW-0677">Repeat</keyword>
<keyword id="KW-0812">Transmembrane</keyword>
<keyword id="KW-1133">Transmembrane helix</keyword>
<organism>
    <name type="scientific">Homo sapiens</name>
    <name type="common">Human</name>
    <dbReference type="NCBI Taxonomy" id="9606"/>
    <lineage>
        <taxon>Eukaryota</taxon>
        <taxon>Metazoa</taxon>
        <taxon>Chordata</taxon>
        <taxon>Craniata</taxon>
        <taxon>Vertebrata</taxon>
        <taxon>Euteleostomi</taxon>
        <taxon>Mammalia</taxon>
        <taxon>Eutheria</taxon>
        <taxon>Euarchontoglires</taxon>
        <taxon>Primates</taxon>
        <taxon>Haplorrhini</taxon>
        <taxon>Catarrhini</taxon>
        <taxon>Hominidae</taxon>
        <taxon>Homo</taxon>
    </lineage>
</organism>
<name>B2L13_HUMAN</name>
<proteinExistence type="evidence at protein level"/>
<sequence length="485" mass="52723">MASSSTVPLGFHYETKYVVLSYLGLLSQEKLQEQHLSSPQGVQLDIASQSLDQEILLKVKTEIEEELKSLDKEISEAFTSTGFDRHTSPVFSPANPESSMEDCLAHLGEKVSQELKEPLHKALQMLLSQPVTYQAFRECTLETTVHASGWNKILVPLVLLRQMLLELTRRGQEPLSALLQFGVTYLEDYSAEYIIQQGGWGTVFSLESEEEEYPGITAEDSNDIYILPSDNSGQVSPPESPTVTTSWQSESLPVSLSASQSWHTESLPVSLGPESWQQIAMDPEEVKSLDSNGAGEKSENNSSNSDIVHVEKEEVPEGMEEAAVASVVLPARELQEALPEAPAPLLPHITATSLLGTREPDTEVITVEKSSPATSLFVELDEEEVKAATTEPTEVEEVVPALEPTETLLSEKEINAREESLVEELSPASEKKPVPPSEGKSRLSPAGEMKPMPLSEGKSILLFGGAAAVAILAVAIGVALALRKK</sequence>
<comment type="function">
    <text>May promote the activation of caspase-3 and apoptosis.</text>
</comment>
<comment type="subunit">
    <text evidence="9">Monomer.</text>
</comment>
<comment type="interaction">
    <interactant intactId="EBI-747430">
        <id>Q9BXK5</id>
    </interactant>
    <interactant intactId="EBI-10827839">
        <id>Q15848</id>
        <label>ADIPOQ</label>
    </interactant>
    <organismsDiffer>false</organismsDiffer>
    <experiments>3</experiments>
</comment>
<comment type="interaction">
    <interactant intactId="EBI-747430">
        <id>Q9BXK5</id>
    </interactant>
    <interactant intactId="EBI-11522760">
        <id>Q6RW13-2</id>
        <label>AGTRAP</label>
    </interactant>
    <organismsDiffer>false</organismsDiffer>
    <experiments>3</experiments>
</comment>
<comment type="interaction">
    <interactant intactId="EBI-747430">
        <id>Q9BXK5</id>
    </interactant>
    <interactant intactId="EBI-11957045">
        <id>Q9NVV5-2</id>
        <label>AIG1</label>
    </interactant>
    <organismsDiffer>false</organismsDiffer>
    <experiments>3</experiments>
</comment>
<comment type="interaction">
    <interactant intactId="EBI-747430">
        <id>Q9BXK5</id>
    </interactant>
    <interactant intactId="EBI-715495">
        <id>P05090</id>
        <label>APOD</label>
    </interactant>
    <organismsDiffer>false</organismsDiffer>
    <experiments>3</experiments>
</comment>
<comment type="interaction">
    <interactant intactId="EBI-747430">
        <id>Q9BXK5</id>
    </interactant>
    <interactant intactId="EBI-745213">
        <id>P29972</id>
        <label>AQP1</label>
    </interactant>
    <organismsDiffer>false</organismsDiffer>
    <experiments>3</experiments>
</comment>
<comment type="interaction">
    <interactant intactId="EBI-747430">
        <id>Q9BXK5</id>
    </interactant>
    <interactant intactId="EBI-10242927">
        <id>Q53XK0</id>
        <label>BET1</label>
    </interactant>
    <organismsDiffer>false</organismsDiffer>
    <experiments>3</experiments>
</comment>
<comment type="interaction">
    <interactant intactId="EBI-747430">
        <id>Q9BXK5</id>
    </interactant>
    <interactant intactId="EBI-12003442">
        <id>Q8WVX3-2</id>
        <label>C4orf3</label>
    </interactant>
    <organismsDiffer>false</organismsDiffer>
    <experiments>5</experiments>
</comment>
<comment type="interaction">
    <interactant intactId="EBI-747430">
        <id>Q9BXK5</id>
    </interactant>
    <interactant intactId="EBI-6657396">
        <id>P19397</id>
        <label>CD53</label>
    </interactant>
    <organismsDiffer>false</organismsDiffer>
    <experiments>3</experiments>
</comment>
<comment type="interaction">
    <interactant intactId="EBI-747430">
        <id>Q9BXK5</id>
    </interactant>
    <interactant intactId="EBI-12256978">
        <id>Q8N6F1-2</id>
        <label>CLDN19</label>
    </interactant>
    <organismsDiffer>false</organismsDiffer>
    <experiments>3</experiments>
</comment>
<comment type="interaction">
    <interactant intactId="EBI-747430">
        <id>Q9BXK5</id>
    </interactant>
    <interactant intactId="EBI-17233035">
        <id>Q9BUF7-2</id>
        <label>CRB3</label>
    </interactant>
    <organismsDiffer>false</organismsDiffer>
    <experiments>3</experiments>
</comment>
<comment type="interaction">
    <interactant intactId="EBI-747430">
        <id>Q9BXK5</id>
    </interactant>
    <interactant intactId="EBI-10305240">
        <id>Q9H1M4</id>
        <label>DEFB127</label>
    </interactant>
    <organismsDiffer>false</organismsDiffer>
    <experiments>3</experiments>
</comment>
<comment type="interaction">
    <interactant intactId="EBI-747430">
        <id>Q9BXK5</id>
    </interactant>
    <interactant intactId="EBI-711490">
        <id>Q9UKR5</id>
        <label>ERG28</label>
    </interactant>
    <organismsDiffer>false</organismsDiffer>
    <experiments>3</experiments>
</comment>
<comment type="interaction">
    <interactant intactId="EBI-747430">
        <id>Q9BXK5</id>
    </interactant>
    <interactant intactId="EBI-10976398">
        <id>Q7Z2K6</id>
        <label>ERMP1</label>
    </interactant>
    <organismsDiffer>false</organismsDiffer>
    <experiments>3</experiments>
</comment>
<comment type="interaction">
    <interactant intactId="EBI-747430">
        <id>Q9BXK5</id>
    </interactant>
    <interactant intactId="EBI-18938272">
        <id>Q96KR6</id>
        <label>FAM210B</label>
    </interactant>
    <organismsDiffer>false</organismsDiffer>
    <experiments>3</experiments>
</comment>
<comment type="interaction">
    <interactant intactId="EBI-747430">
        <id>Q9BXK5</id>
    </interactant>
    <interactant intactId="EBI-12175685">
        <id>Q14802-3</id>
        <label>FXYD3</label>
    </interactant>
    <organismsDiffer>false</organismsDiffer>
    <experiments>3</experiments>
</comment>
<comment type="interaction">
    <interactant intactId="EBI-747430">
        <id>Q9BXK5</id>
    </interactant>
    <interactant intactId="EBI-746917">
        <id>O75084</id>
        <label>FZD7</label>
    </interactant>
    <organismsDiffer>false</organismsDiffer>
    <experiments>3</experiments>
</comment>
<comment type="interaction">
    <interactant intactId="EBI-747430">
        <id>Q9BXK5</id>
    </interactant>
    <interactant intactId="EBI-720116">
        <id>P60520</id>
        <label>GABARAPL2</label>
    </interactant>
    <organismsDiffer>false</organismsDiffer>
    <experiments>4</experiments>
</comment>
<comment type="interaction">
    <interactant intactId="EBI-747430">
        <id>Q9BXK5</id>
    </interactant>
    <interactant intactId="EBI-10226985">
        <id>Q10471</id>
        <label>GALNT2</label>
    </interactant>
    <organismsDiffer>false</organismsDiffer>
    <experiments>3</experiments>
</comment>
<comment type="interaction">
    <interactant intactId="EBI-747430">
        <id>Q9BXK5</id>
    </interactant>
    <interactant intactId="EBI-3436637">
        <id>P01350</id>
        <label>GAST</label>
    </interactant>
    <organismsDiffer>false</organismsDiffer>
    <experiments>3</experiments>
</comment>
<comment type="interaction">
    <interactant intactId="EBI-747430">
        <id>Q9BXK5</id>
    </interactant>
    <interactant intactId="EBI-712096">
        <id>P30519</id>
        <label>HMOX2</label>
    </interactant>
    <organismsDiffer>false</organismsDiffer>
    <experiments>3</experiments>
</comment>
<comment type="interaction">
    <interactant intactId="EBI-747430">
        <id>Q9BXK5</id>
    </interactant>
    <interactant intactId="EBI-10266796">
        <id>Q8N5M9</id>
        <label>JAGN1</label>
    </interactant>
    <organismsDiffer>false</organismsDiffer>
    <experiments>3</experiments>
</comment>
<comment type="interaction">
    <interactant intactId="EBI-747430">
        <id>Q9BXK5</id>
    </interactant>
    <interactant intactId="EBI-10975473">
        <id>O60333-2</id>
        <label>KIF1B</label>
    </interactant>
    <organismsDiffer>false</organismsDiffer>
    <experiments>3</experiments>
</comment>
<comment type="interaction">
    <interactant intactId="EBI-747430">
        <id>Q9BXK5</id>
    </interactant>
    <interactant intactId="EBI-8070286">
        <id>O43561-2</id>
        <label>LAT</label>
    </interactant>
    <organismsDiffer>false</organismsDiffer>
    <experiments>3</experiments>
</comment>
<comment type="interaction">
    <interactant intactId="EBI-747430">
        <id>Q9BXK5</id>
    </interactant>
    <interactant intactId="EBI-12033434">
        <id>Q9UBY5</id>
        <label>LPAR3</label>
    </interactant>
    <organismsDiffer>false</organismsDiffer>
    <experiments>3</experiments>
</comment>
<comment type="interaction">
    <interactant intactId="EBI-747430">
        <id>Q9BXK5</id>
    </interactant>
    <interactant intactId="EBI-3932027">
        <id>P21145</id>
        <label>MAL</label>
    </interactant>
    <organismsDiffer>false</organismsDiffer>
    <experiments>5</experiments>
</comment>
<comment type="interaction">
    <interactant intactId="EBI-747430">
        <id>Q9BXK5</id>
    </interactant>
    <interactant intactId="EBI-10317425">
        <id>Q9NZG7</id>
        <label>NINJ2</label>
    </interactant>
    <organismsDiffer>false</organismsDiffer>
    <experiments>3</experiments>
</comment>
<comment type="interaction">
    <interactant intactId="EBI-747430">
        <id>Q9BXK5</id>
    </interactant>
    <interactant intactId="EBI-3919291">
        <id>Q9Y342</id>
        <label>PLLP</label>
    </interactant>
    <organismsDiffer>false</organismsDiffer>
    <experiments>3</experiments>
</comment>
<comment type="interaction">
    <interactant intactId="EBI-747430">
        <id>Q9BXK5</id>
    </interactant>
    <interactant intactId="EBI-692836">
        <id>P26678</id>
        <label>PLN</label>
    </interactant>
    <organismsDiffer>false</organismsDiffer>
    <experiments>8</experiments>
</comment>
<comment type="interaction">
    <interactant intactId="EBI-747430">
        <id>Q9BXK5</id>
    </interactant>
    <interactant intactId="EBI-8653150">
        <id>P60201</id>
        <label>PLP1</label>
    </interactant>
    <organismsDiffer>false</organismsDiffer>
    <experiments>3</experiments>
</comment>
<comment type="interaction">
    <interactant intactId="EBI-747430">
        <id>Q9BXK5</id>
    </interactant>
    <interactant intactId="EBI-12188331">
        <id>P60201-2</id>
        <label>PLP1</label>
    </interactant>
    <organismsDiffer>false</organismsDiffer>
    <experiments>6</experiments>
</comment>
<comment type="interaction">
    <interactant intactId="EBI-747430">
        <id>Q9BXK5</id>
    </interactant>
    <interactant intactId="EBI-10485931">
        <id>Q5VZY2</id>
        <label>PLPP4</label>
    </interactant>
    <organismsDiffer>false</organismsDiffer>
    <experiments>3</experiments>
</comment>
<comment type="interaction">
    <interactant intactId="EBI-747430">
        <id>Q9BXK5</id>
    </interactant>
    <interactant intactId="EBI-10262251">
        <id>Q8IWU4</id>
        <label>SLC30A8</label>
    </interactant>
    <organismsDiffer>false</organismsDiffer>
    <experiments>3</experiments>
</comment>
<comment type="interaction">
    <interactant intactId="EBI-747430">
        <id>Q9BXK5</id>
    </interactant>
    <interactant intactId="EBI-12870360">
        <id>P78382</id>
        <label>SLC35A1</label>
    </interactant>
    <organismsDiffer>false</organismsDiffer>
    <experiments>3</experiments>
</comment>
<comment type="interaction">
    <interactant intactId="EBI-747430">
        <id>Q9BXK5</id>
    </interactant>
    <interactant intactId="EBI-13598465">
        <id>Q96KT7</id>
        <label>SLC35G5</label>
    </interactant>
    <organismsDiffer>false</organismsDiffer>
    <experiments>3</experiments>
</comment>
<comment type="interaction">
    <interactant intactId="EBI-747430">
        <id>Q9BXK5</id>
    </interactant>
    <interactant intactId="EBI-12188413">
        <id>B2RUZ4</id>
        <label>SMIM1</label>
    </interactant>
    <organismsDiffer>false</organismsDiffer>
    <experiments>3</experiments>
</comment>
<comment type="interaction">
    <interactant intactId="EBI-747430">
        <id>Q9BXK5</id>
    </interactant>
    <interactant intactId="EBI-990792">
        <id>P00441</id>
        <label>SOD1</label>
    </interactant>
    <organismsDiffer>false</organismsDiffer>
    <experiments>2</experiments>
</comment>
<comment type="interaction">
    <interactant intactId="EBI-747430">
        <id>Q9BXK5</id>
    </interactant>
    <interactant intactId="EBI-2682560">
        <id>Q08629</id>
        <label>SPOCK1</label>
    </interactant>
    <organismsDiffer>false</organismsDiffer>
    <experiments>3</experiments>
</comment>
<comment type="interaction">
    <interactant intactId="EBI-747430">
        <id>Q9BXK5</id>
    </interactant>
    <interactant intactId="EBI-2691717">
        <id>Q86Y82</id>
        <label>STX12</label>
    </interactant>
    <organismsDiffer>false</organismsDiffer>
    <experiments>3</experiments>
</comment>
<comment type="interaction">
    <interactant intactId="EBI-747430">
        <id>Q9BXK5</id>
    </interactant>
    <interactant intactId="EBI-727240">
        <id>Q9UNK0</id>
        <label>STX8</label>
    </interactant>
    <organismsDiffer>false</organismsDiffer>
    <experiments>3</experiments>
</comment>
<comment type="interaction">
    <interactant intactId="EBI-747430">
        <id>Q9BXK5</id>
    </interactant>
    <interactant intactId="EBI-13082040">
        <id>Q9BZW4</id>
        <label>TM6SF2</label>
    </interactant>
    <organismsDiffer>false</organismsDiffer>
    <experiments>3</experiments>
</comment>
<comment type="interaction">
    <interactant intactId="EBI-747430">
        <id>Q9BXK5</id>
    </interactant>
    <interactant intactId="EBI-10243515">
        <id>Q5BJH2</id>
        <label>TMEM128</label>
    </interactant>
    <organismsDiffer>false</organismsDiffer>
    <experiments>3</experiments>
</comment>
<comment type="interaction">
    <interactant intactId="EBI-747430">
        <id>Q9BXK5</id>
    </interactant>
    <interactant intactId="EBI-2339195">
        <id>Q9P0S9</id>
        <label>TMEM14C</label>
    </interactant>
    <organismsDiffer>false</organismsDiffer>
    <experiments>3</experiments>
</comment>
<comment type="interaction">
    <interactant intactId="EBI-747430">
        <id>Q9BXK5</id>
    </interactant>
    <interactant intactId="EBI-10315004">
        <id>Q9NWH2</id>
        <label>TMEM242</label>
    </interactant>
    <organismsDiffer>false</organismsDiffer>
    <experiments>3</experiments>
</comment>
<comment type="interaction">
    <interactant intactId="EBI-747430">
        <id>Q9BXK5</id>
    </interactant>
    <interactant intactId="EBI-11956809">
        <id>Q8TBM7</id>
        <label>TMEM254</label>
    </interactant>
    <organismsDiffer>false</organismsDiffer>
    <experiments>3</experiments>
</comment>
<comment type="interaction">
    <interactant intactId="EBI-747430">
        <id>Q9BXK5</id>
    </interactant>
    <interactant intactId="EBI-726044">
        <id>Q9NW97</id>
        <label>TMEM51</label>
    </interactant>
    <organismsDiffer>false</organismsDiffer>
    <experiments>3</experiments>
</comment>
<comment type="interaction">
    <interactant intactId="EBI-747430">
        <id>Q9BXK5</id>
    </interactant>
    <interactant intactId="EBI-12878352">
        <id>A0PK05</id>
        <label>TMEM72</label>
    </interactant>
    <organismsDiffer>false</organismsDiffer>
    <experiments>3</experiments>
</comment>
<comment type="interaction">
    <interactant intactId="EBI-747430">
        <id>Q9BXK5</id>
    </interactant>
    <interactant intactId="EBI-12015604">
        <id>Q8N2M4</id>
        <label>TMEM86A</label>
    </interactant>
    <organismsDiffer>false</organismsDiffer>
    <experiments>3</experiments>
</comment>
<comment type="interaction">
    <interactant intactId="EBI-747430">
        <id>Q9BXK5</id>
    </interactant>
    <interactant intactId="EBI-2548832">
        <id>Q8N661</id>
        <label>TMEM86B</label>
    </interactant>
    <organismsDiffer>false</organismsDiffer>
    <experiments>6</experiments>
</comment>
<comment type="interaction">
    <interactant intactId="EBI-747430">
        <id>Q9BXK5</id>
    </interactant>
    <interactant intactId="EBI-12111910">
        <id>Q5BJF2</id>
        <label>TMEM97</label>
    </interactant>
    <organismsDiffer>false</organismsDiffer>
    <experiments>3</experiments>
</comment>
<comment type="interaction">
    <interactant intactId="EBI-747430">
        <id>Q9BXK5</id>
    </interactant>
    <interactant intactId="EBI-2820477">
        <id>Q71RG4</id>
        <label>TMUB2</label>
    </interactant>
    <organismsDiffer>false</organismsDiffer>
    <experiments>3</experiments>
</comment>
<comment type="interaction">
    <interactant intactId="EBI-747430">
        <id>Q9BXK5</id>
    </interactant>
    <interactant intactId="EBI-359977">
        <id>P01375</id>
        <label>TNF</label>
    </interactant>
    <organismsDiffer>false</organismsDiffer>
    <experiments>3</experiments>
</comment>
<comment type="interaction">
    <interactant intactId="EBI-747430">
        <id>Q9BXK5</id>
    </interactant>
    <interactant intactId="EBI-12003398">
        <id>Q9H2S6-2</id>
        <label>TNMD</label>
    </interactant>
    <organismsDiffer>false</organismsDiffer>
    <experiments>3</experiments>
</comment>
<comment type="interaction">
    <interactant intactId="EBI-747430">
        <id>Q9BXK5</id>
    </interactant>
    <interactant intactId="EBI-11988865">
        <id>A5PKU2</id>
        <label>TUSC5</label>
    </interactant>
    <organismsDiffer>false</organismsDiffer>
    <experiments>3</experiments>
</comment>
<comment type="interaction">
    <interactant intactId="EBI-747430">
        <id>Q9BXK5</id>
    </interactant>
    <interactant intactId="EBI-722343">
        <id>Q15836</id>
        <label>VAMP3</label>
    </interactant>
    <organismsDiffer>false</organismsDiffer>
    <experiments>3</experiments>
</comment>
<comment type="interaction">
    <interactant intactId="EBI-747430">
        <id>Q9BXK5</id>
    </interactant>
    <interactant intactId="EBI-10187996">
        <id>O75379-2</id>
        <label>VAMP4</label>
    </interactant>
    <organismsDiffer>false</organismsDiffer>
    <experiments>3</experiments>
</comment>
<comment type="interaction">
    <interactant intactId="EBI-747430">
        <id>Q9BXK5</id>
    </interactant>
    <interactant intactId="EBI-720609">
        <id>O76024</id>
        <label>WFS1</label>
    </interactant>
    <organismsDiffer>false</organismsDiffer>
    <experiments>3</experiments>
</comment>
<comment type="interaction">
    <interactant intactId="EBI-747430">
        <id>Q9BXK5</id>
    </interactant>
    <interactant intactId="EBI-10175711">
        <id>B2R9H7</id>
    </interactant>
    <organismsDiffer>false</organismsDiffer>
    <experiments>3</experiments>
</comment>
<comment type="interaction">
    <interactant intactId="EBI-747430">
        <id>Q9BXK5</id>
    </interactant>
    <interactant intactId="EBI-15625247">
        <id>Q5ZSD5</id>
        <label>sidF</label>
    </interactant>
    <organismsDiffer>true</organismsDiffer>
    <experiments>7</experiments>
</comment>
<comment type="subcellular location">
    <molecule>Isoform 2</molecule>
    <subcellularLocation>
        <location evidence="9">Mitochondrion membrane</location>
        <topology evidence="9">Single-pass membrane protein</topology>
    </subcellularLocation>
    <subcellularLocation>
        <location evidence="9">Nucleus</location>
    </subcellularLocation>
</comment>
<comment type="subcellular location">
    <molecule>Isoform 1</molecule>
    <subcellularLocation>
        <location evidence="9">Nucleus</location>
    </subcellularLocation>
</comment>
<comment type="alternative products">
    <event type="alternative splicing"/>
    <isoform>
        <id>Q9BXK5-1</id>
        <name>2</name>
        <sequence type="displayed"/>
    </isoform>
    <isoform>
        <id>Q9BXK5-2</id>
        <name>1</name>
        <sequence type="described" ref="VSP_000526 VSP_000527"/>
    </isoform>
    <isoform>
        <id>Q9BXK5-4</id>
        <name>3</name>
        <sequence type="described" ref="VSP_046931"/>
    </isoform>
    <text>Experimental confirmation may be lacking for some isoforms.</text>
</comment>
<comment type="tissue specificity">
    <text>Ubiquitous, with the highest levels of expression in heart, placenta and pancreas.</text>
</comment>
<comment type="similarity">
    <text evidence="9">Belongs to the Bcl-2 family.</text>
</comment>
<comment type="sequence caution" evidence="9">
    <conflict type="erroneous initiation">
        <sequence resource="EMBL-CDS" id="AAF03602"/>
    </conflict>
</comment>
<comment type="sequence caution" evidence="9">
    <conflict type="frameshift">
        <sequence resource="EMBL-CDS" id="AAG09680"/>
    </conflict>
</comment>